<proteinExistence type="inferred from homology"/>
<accession>Q9PJV0</accession>
<organism>
    <name type="scientific">Chlamydia muridarum (strain MoPn / Nigg)</name>
    <dbReference type="NCBI Taxonomy" id="243161"/>
    <lineage>
        <taxon>Bacteria</taxon>
        <taxon>Pseudomonadati</taxon>
        <taxon>Chlamydiota</taxon>
        <taxon>Chlamydiia</taxon>
        <taxon>Chlamydiales</taxon>
        <taxon>Chlamydiaceae</taxon>
        <taxon>Chlamydia/Chlamydophila group</taxon>
        <taxon>Chlamydia</taxon>
    </lineage>
</organism>
<protein>
    <recommendedName>
        <fullName>Large cysteine-rich periplasmic protein OmcB</fullName>
        <shortName>Large-CRP</shortName>
    </recommendedName>
    <alternativeName>
        <fullName>60 kDa CRP</fullName>
    </alternativeName>
    <alternativeName>
        <fullName>60 kDa outer membrane protein</fullName>
    </alternativeName>
    <alternativeName>
        <fullName>Cysteine-rich outer membrane protein</fullName>
    </alternativeName>
</protein>
<comment type="function">
    <text evidence="1">In elementary bodies (EBs, the infectious stage, which is able to survive outside the host cell) provides the structural integrity of the outer envelope through disulfide cross-links with the small cysteine-rich protein and the major outer membrane porin. It has been described in publications as the Sarkosyl-insoluble COMC (Chlamydia outer membrane complex), and serves as the functional equivalent of peptidoglycan. It is present but the disulfide bonds are reduced in reticulate bodies (RBs) (By similarity).</text>
</comment>
<comment type="subunit">
    <text evidence="1">Part of a disulfide cross-linked outer membrane complex (COMC) composed of the major outer membrane porin (MOMP), the small cysteine-rich protein (OmcA) and the large cysteine-rich periplasmic protein (OmcB).</text>
</comment>
<comment type="subcellular location">
    <subcellularLocation>
        <location evidence="4">Periplasm</location>
    </subcellularLocation>
</comment>
<comment type="caution">
    <text evidence="4">Was thought to be an outer membrane protein as it is part of a disulfide cross-linked complex that is insoluble in the detergent Sarkosyl; however based on experiments in C.psittaci it is likely to be periplasmic.</text>
</comment>
<comment type="sequence caution" evidence="4">
    <conflict type="erroneous initiation">
        <sequence resource="EMBL-CDS" id="AAF39537"/>
    </conflict>
</comment>
<dbReference type="EMBL" id="AE002160">
    <property type="protein sequence ID" value="AAF39537.1"/>
    <property type="status" value="ALT_INIT"/>
    <property type="molecule type" value="Genomic_DNA"/>
</dbReference>
<dbReference type="PIR" id="C81671">
    <property type="entry name" value="C81671"/>
</dbReference>
<dbReference type="RefSeq" id="WP_029589527.1">
    <property type="nucleotide sequence ID" value="NZ_CP063055.1"/>
</dbReference>
<dbReference type="GeneID" id="1246090"/>
<dbReference type="KEGG" id="cmu:TC_0727"/>
<dbReference type="eggNOG" id="COG1361">
    <property type="taxonomic scope" value="Bacteria"/>
</dbReference>
<dbReference type="HOGENOM" id="CLU_029611_0_0_0"/>
<dbReference type="Proteomes" id="UP000000800">
    <property type="component" value="Chromosome"/>
</dbReference>
<dbReference type="GO" id="GO:0042597">
    <property type="term" value="C:periplasmic space"/>
    <property type="evidence" value="ECO:0007669"/>
    <property type="project" value="UniProtKB-SubCell"/>
</dbReference>
<dbReference type="GO" id="GO:0005201">
    <property type="term" value="F:extracellular matrix structural constituent"/>
    <property type="evidence" value="ECO:0007669"/>
    <property type="project" value="InterPro"/>
</dbReference>
<dbReference type="GO" id="GO:0008360">
    <property type="term" value="P:regulation of cell shape"/>
    <property type="evidence" value="ECO:0007669"/>
    <property type="project" value="UniProtKB-KW"/>
</dbReference>
<dbReference type="Gene3D" id="2.60.40.10">
    <property type="entry name" value="Immunoglobulins"/>
    <property type="match status" value="1"/>
</dbReference>
<dbReference type="InterPro" id="IPR003506">
    <property type="entry name" value="Chlam_OMP6"/>
</dbReference>
<dbReference type="InterPro" id="IPR051172">
    <property type="entry name" value="Chlamydia_OmcB"/>
</dbReference>
<dbReference type="InterPro" id="IPR047589">
    <property type="entry name" value="DUF11_rpt"/>
</dbReference>
<dbReference type="InterPro" id="IPR013783">
    <property type="entry name" value="Ig-like_fold"/>
</dbReference>
<dbReference type="InterPro" id="IPR001434">
    <property type="entry name" value="OmcB-like_DUF11"/>
</dbReference>
<dbReference type="NCBIfam" id="TIGR01451">
    <property type="entry name" value="B_ant_repeat"/>
    <property type="match status" value="1"/>
</dbReference>
<dbReference type="PANTHER" id="PTHR34819">
    <property type="entry name" value="LARGE CYSTEINE-RICH PERIPLASMIC PROTEIN OMCB"/>
    <property type="match status" value="1"/>
</dbReference>
<dbReference type="PANTHER" id="PTHR34819:SF4">
    <property type="entry name" value="LARGE CYSTEINE-RICH PERIPLASMIC PROTEIN OMCB"/>
    <property type="match status" value="1"/>
</dbReference>
<dbReference type="Pfam" id="PF03504">
    <property type="entry name" value="Chlam_OMP6"/>
    <property type="match status" value="1"/>
</dbReference>
<dbReference type="Pfam" id="PF01345">
    <property type="entry name" value="DUF11"/>
    <property type="match status" value="3"/>
</dbReference>
<dbReference type="PRINTS" id="PR01336">
    <property type="entry name" value="CHLAMIDIAOM6"/>
</dbReference>
<name>OMCB_CHLMU</name>
<feature type="signal peptide" evidence="2">
    <location>
        <begin position="1"/>
        <end position="22"/>
    </location>
</feature>
<feature type="propeptide" id="PRO_0000248868" evidence="2">
    <location>
        <begin position="23"/>
        <end position="40"/>
    </location>
</feature>
<feature type="chain" id="PRO_0000248869" description="Large cysteine-rich periplasmic protein OmcB">
    <location>
        <begin position="41"/>
        <end position="548"/>
    </location>
</feature>
<feature type="region of interest" description="Disordered" evidence="3">
    <location>
        <begin position="45"/>
        <end position="65"/>
    </location>
</feature>
<feature type="compositionally biased region" description="Basic residues" evidence="3">
    <location>
        <begin position="54"/>
        <end position="63"/>
    </location>
</feature>
<keyword id="KW-0133">Cell shape</keyword>
<keyword id="KW-1015">Disulfide bond</keyword>
<keyword id="KW-0574">Periplasm</keyword>
<keyword id="KW-0732">Signal</keyword>
<sequence>MNKLIRRAVTIFAVTSVASLFASGVLETSMAESLSTNVISLADTKAKETTSHQKDRKARKNHQNRTSVVRKEVTAVRDTKAVEPRQDSCFGKMYTVKVNDDRNVEIVQSVPEYATVGSPYPIEITAIGKRDCVDVIITQQLPCEAEFVSSDPATTPTADGKLVWKIDRLGQGEKSKITVWVKPLKEGCCFTAATVCACPEIRSVTKCGQPAICVKQEGPESACLRCPVTYRINVVNQGTATARNVVVENPVPDGYAHASGQRVLTYTLGDMQPGEQRTITVEFCPLKRGRVTNIATVSYCGGHKNTASVTTVINEPCVQVNIEGADWSYVCKPVEYVISVSNPGDLVLRDVVIEDTLSPGITVVEAAGAQISCNKLVWTLKELNPGESLQYKVLVRAQTPGQFTNNVVVKSCSDCGICTSCAEATTYWKGVAATHMCVVDTCDPICVGENTVYRICVTNRGSAEDTNVSLILKFSKELQPISFSGPTKGTITGNTVVFDSLPRLGSKETVEFSVTLKAVSAGDARGEAILSSDTLTVPVSDTENTHIY</sequence>
<evidence type="ECO:0000250" key="1"/>
<evidence type="ECO:0000255" key="2"/>
<evidence type="ECO:0000256" key="3">
    <source>
        <dbReference type="SAM" id="MobiDB-lite"/>
    </source>
</evidence>
<evidence type="ECO:0000305" key="4"/>
<gene>
    <name type="primary">omcB</name>
    <name type="ordered locus">TC_0727</name>
</gene>
<reference key="1">
    <citation type="journal article" date="2000" name="Nucleic Acids Res.">
        <title>Genome sequences of Chlamydia trachomatis MoPn and Chlamydia pneumoniae AR39.</title>
        <authorList>
            <person name="Read T.D."/>
            <person name="Brunham R.C."/>
            <person name="Shen C."/>
            <person name="Gill S.R."/>
            <person name="Heidelberg J.F."/>
            <person name="White O."/>
            <person name="Hickey E.K."/>
            <person name="Peterson J.D."/>
            <person name="Utterback T.R."/>
            <person name="Berry K.J."/>
            <person name="Bass S."/>
            <person name="Linher K.D."/>
            <person name="Weidman J.F."/>
            <person name="Khouri H.M."/>
            <person name="Craven B."/>
            <person name="Bowman C."/>
            <person name="Dodson R.J."/>
            <person name="Gwinn M.L."/>
            <person name="Nelson W.C."/>
            <person name="DeBoy R.T."/>
            <person name="Kolonay J.F."/>
            <person name="McClarty G."/>
            <person name="Salzberg S.L."/>
            <person name="Eisen J.A."/>
            <person name="Fraser C.M."/>
        </authorList>
    </citation>
    <scope>NUCLEOTIDE SEQUENCE [LARGE SCALE GENOMIC DNA]</scope>
    <source>
        <strain>MoPn / Nigg</strain>
    </source>
</reference>